<keyword id="KW-0067">ATP-binding</keyword>
<keyword id="KW-0143">Chaperone</keyword>
<keyword id="KW-0963">Cytoplasm</keyword>
<keyword id="KW-0547">Nucleotide-binding</keyword>
<keyword id="KW-1185">Reference proteome</keyword>
<keyword id="KW-0346">Stress response</keyword>
<protein>
    <recommendedName>
        <fullName evidence="1">ATP-dependent protease ATPase subunit HslU</fullName>
    </recommendedName>
    <alternativeName>
        <fullName evidence="1">Unfoldase HslU</fullName>
    </alternativeName>
</protein>
<accession>B6IWI0</accession>
<gene>
    <name evidence="1" type="primary">hslU</name>
    <name type="ordered locus">RC1_3292</name>
</gene>
<name>HSLU_RHOCS</name>
<feature type="chain" id="PRO_1000100966" description="ATP-dependent protease ATPase subunit HslU">
    <location>
        <begin position="1"/>
        <end position="437"/>
    </location>
</feature>
<feature type="binding site" evidence="1">
    <location>
        <position position="18"/>
    </location>
    <ligand>
        <name>ATP</name>
        <dbReference type="ChEBI" id="CHEBI:30616"/>
    </ligand>
</feature>
<feature type="binding site" evidence="1">
    <location>
        <begin position="60"/>
        <end position="65"/>
    </location>
    <ligand>
        <name>ATP</name>
        <dbReference type="ChEBI" id="CHEBI:30616"/>
    </ligand>
</feature>
<feature type="binding site" evidence="1">
    <location>
        <position position="249"/>
    </location>
    <ligand>
        <name>ATP</name>
        <dbReference type="ChEBI" id="CHEBI:30616"/>
    </ligand>
</feature>
<feature type="binding site" evidence="1">
    <location>
        <position position="315"/>
    </location>
    <ligand>
        <name>ATP</name>
        <dbReference type="ChEBI" id="CHEBI:30616"/>
    </ligand>
</feature>
<feature type="binding site" evidence="1">
    <location>
        <position position="387"/>
    </location>
    <ligand>
        <name>ATP</name>
        <dbReference type="ChEBI" id="CHEBI:30616"/>
    </ligand>
</feature>
<dbReference type="EMBL" id="CP000613">
    <property type="protein sequence ID" value="ACJ00654.1"/>
    <property type="molecule type" value="Genomic_DNA"/>
</dbReference>
<dbReference type="RefSeq" id="WP_012568432.1">
    <property type="nucleotide sequence ID" value="NC_011420.2"/>
</dbReference>
<dbReference type="SMR" id="B6IWI0"/>
<dbReference type="STRING" id="414684.RC1_3292"/>
<dbReference type="KEGG" id="rce:RC1_3292"/>
<dbReference type="eggNOG" id="COG1220">
    <property type="taxonomic scope" value="Bacteria"/>
</dbReference>
<dbReference type="HOGENOM" id="CLU_033123_0_0_5"/>
<dbReference type="OrthoDB" id="9804062at2"/>
<dbReference type="Proteomes" id="UP000001591">
    <property type="component" value="Chromosome"/>
</dbReference>
<dbReference type="GO" id="GO:0009376">
    <property type="term" value="C:HslUV protease complex"/>
    <property type="evidence" value="ECO:0007669"/>
    <property type="project" value="UniProtKB-UniRule"/>
</dbReference>
<dbReference type="GO" id="GO:0005524">
    <property type="term" value="F:ATP binding"/>
    <property type="evidence" value="ECO:0007669"/>
    <property type="project" value="UniProtKB-UniRule"/>
</dbReference>
<dbReference type="GO" id="GO:0016887">
    <property type="term" value="F:ATP hydrolysis activity"/>
    <property type="evidence" value="ECO:0007669"/>
    <property type="project" value="InterPro"/>
</dbReference>
<dbReference type="GO" id="GO:0008233">
    <property type="term" value="F:peptidase activity"/>
    <property type="evidence" value="ECO:0007669"/>
    <property type="project" value="InterPro"/>
</dbReference>
<dbReference type="GO" id="GO:0036402">
    <property type="term" value="F:proteasome-activating activity"/>
    <property type="evidence" value="ECO:0007669"/>
    <property type="project" value="UniProtKB-UniRule"/>
</dbReference>
<dbReference type="GO" id="GO:0043335">
    <property type="term" value="P:protein unfolding"/>
    <property type="evidence" value="ECO:0007669"/>
    <property type="project" value="UniProtKB-UniRule"/>
</dbReference>
<dbReference type="GO" id="GO:0051603">
    <property type="term" value="P:proteolysis involved in protein catabolic process"/>
    <property type="evidence" value="ECO:0007669"/>
    <property type="project" value="TreeGrafter"/>
</dbReference>
<dbReference type="CDD" id="cd19498">
    <property type="entry name" value="RecA-like_HslU"/>
    <property type="match status" value="1"/>
</dbReference>
<dbReference type="FunFam" id="3.40.50.300:FF:000213">
    <property type="entry name" value="ATP-dependent protease ATPase subunit HslU"/>
    <property type="match status" value="1"/>
</dbReference>
<dbReference type="FunFam" id="3.40.50.300:FF:000220">
    <property type="entry name" value="ATP-dependent protease ATPase subunit HslU"/>
    <property type="match status" value="1"/>
</dbReference>
<dbReference type="Gene3D" id="1.10.8.60">
    <property type="match status" value="1"/>
</dbReference>
<dbReference type="Gene3D" id="1.10.8.10">
    <property type="entry name" value="DNA helicase RuvA subunit, C-terminal domain"/>
    <property type="match status" value="1"/>
</dbReference>
<dbReference type="Gene3D" id="3.40.50.300">
    <property type="entry name" value="P-loop containing nucleotide triphosphate hydrolases"/>
    <property type="match status" value="2"/>
</dbReference>
<dbReference type="HAMAP" id="MF_00249">
    <property type="entry name" value="HslU"/>
    <property type="match status" value="1"/>
</dbReference>
<dbReference type="InterPro" id="IPR003593">
    <property type="entry name" value="AAA+_ATPase"/>
</dbReference>
<dbReference type="InterPro" id="IPR050052">
    <property type="entry name" value="ATP-dep_Clp_protease_ClpX"/>
</dbReference>
<dbReference type="InterPro" id="IPR003959">
    <property type="entry name" value="ATPase_AAA_core"/>
</dbReference>
<dbReference type="InterPro" id="IPR019489">
    <property type="entry name" value="Clp_ATPase_C"/>
</dbReference>
<dbReference type="InterPro" id="IPR004491">
    <property type="entry name" value="HslU"/>
</dbReference>
<dbReference type="InterPro" id="IPR027417">
    <property type="entry name" value="P-loop_NTPase"/>
</dbReference>
<dbReference type="NCBIfam" id="TIGR00390">
    <property type="entry name" value="hslU"/>
    <property type="match status" value="1"/>
</dbReference>
<dbReference type="NCBIfam" id="NF003544">
    <property type="entry name" value="PRK05201.1"/>
    <property type="match status" value="1"/>
</dbReference>
<dbReference type="PANTHER" id="PTHR48102">
    <property type="entry name" value="ATP-DEPENDENT CLP PROTEASE ATP-BINDING SUBUNIT CLPX-LIKE, MITOCHONDRIAL-RELATED"/>
    <property type="match status" value="1"/>
</dbReference>
<dbReference type="PANTHER" id="PTHR48102:SF3">
    <property type="entry name" value="ATP-DEPENDENT PROTEASE ATPASE SUBUNIT HSLU"/>
    <property type="match status" value="1"/>
</dbReference>
<dbReference type="Pfam" id="PF00004">
    <property type="entry name" value="AAA"/>
    <property type="match status" value="1"/>
</dbReference>
<dbReference type="Pfam" id="PF07724">
    <property type="entry name" value="AAA_2"/>
    <property type="match status" value="1"/>
</dbReference>
<dbReference type="SMART" id="SM00382">
    <property type="entry name" value="AAA"/>
    <property type="match status" value="1"/>
</dbReference>
<dbReference type="SMART" id="SM01086">
    <property type="entry name" value="ClpB_D2-small"/>
    <property type="match status" value="1"/>
</dbReference>
<dbReference type="SUPFAM" id="SSF52540">
    <property type="entry name" value="P-loop containing nucleoside triphosphate hydrolases"/>
    <property type="match status" value="1"/>
</dbReference>
<evidence type="ECO:0000255" key="1">
    <source>
        <dbReference type="HAMAP-Rule" id="MF_00249"/>
    </source>
</evidence>
<reference key="1">
    <citation type="submission" date="2007-03" db="EMBL/GenBank/DDBJ databases">
        <title>Genome sequence of Rhodospirillum centenum.</title>
        <authorList>
            <person name="Touchman J.W."/>
            <person name="Bauer C."/>
            <person name="Blankenship R.E."/>
        </authorList>
    </citation>
    <scope>NUCLEOTIDE SEQUENCE [LARGE SCALE GENOMIC DNA]</scope>
    <source>
        <strain>ATCC 51521 / SW</strain>
    </source>
</reference>
<organism>
    <name type="scientific">Rhodospirillum centenum (strain ATCC 51521 / SW)</name>
    <dbReference type="NCBI Taxonomy" id="414684"/>
    <lineage>
        <taxon>Bacteria</taxon>
        <taxon>Pseudomonadati</taxon>
        <taxon>Pseudomonadota</taxon>
        <taxon>Alphaproteobacteria</taxon>
        <taxon>Rhodospirillales</taxon>
        <taxon>Rhodospirillaceae</taxon>
        <taxon>Rhodospirillum</taxon>
    </lineage>
</organism>
<comment type="function">
    <text evidence="1">ATPase subunit of a proteasome-like degradation complex; this subunit has chaperone activity. The binding of ATP and its subsequent hydrolysis by HslU are essential for unfolding of protein substrates subsequently hydrolyzed by HslV. HslU recognizes the N-terminal part of its protein substrates and unfolds these before they are guided to HslV for hydrolysis.</text>
</comment>
<comment type="subunit">
    <text evidence="1">A double ring-shaped homohexamer of HslV is capped on each side by a ring-shaped HslU homohexamer. The assembly of the HslU/HslV complex is dependent on binding of ATP.</text>
</comment>
<comment type="subcellular location">
    <subcellularLocation>
        <location evidence="1">Cytoplasm</location>
    </subcellularLocation>
</comment>
<comment type="similarity">
    <text evidence="1">Belongs to the ClpX chaperone family. HslU subfamily.</text>
</comment>
<sequence length="437" mass="48584">MTSFSPREIVSELDRYIVGQHEAKRAVAIALRNRWRRQQLPEGLREEVLPKNILMIGPTGVGKTEIARRLARLAQAPFLKVEATKFTEVGYVGRDVEQIIRDLVEIAIGLTRERLRKEVASKAELRAEDRVLEALVGANASGETRQKFRKMLREGQLNDREIEIQVQDTSVQGLPTFDVPGMPGAQMGMINLGDIFGKALGGRTKVRRMSVSESYDVLMAEESDKLLDQEKVVSEAIQSVEQNGIVFLDEIDKITARSEVRGGADVSREGVQRDLLPLIEGTTVNTKHGPVKTDHVLFIASGAFHLAKPSDLLPELQGRLPIRVELKALSQEDFRRILTEPEASLIKQYKALLATEGMTLDFTDDGIDELARLAADINRSVENIGARRLHTVLERLLEEISFTASDRSGESVTIDAAYVRGQLQGLAQNTDLSKFIL</sequence>
<proteinExistence type="inferred from homology"/>